<evidence type="ECO:0000255" key="1">
    <source>
        <dbReference type="HAMAP-Rule" id="MF_00031"/>
    </source>
</evidence>
<protein>
    <recommendedName>
        <fullName evidence="1">Holliday junction branch migration complex subunit RuvA</fullName>
    </recommendedName>
</protein>
<comment type="function">
    <text evidence="1">The RuvA-RuvB-RuvC complex processes Holliday junction (HJ) DNA during genetic recombination and DNA repair, while the RuvA-RuvB complex plays an important role in the rescue of blocked DNA replication forks via replication fork reversal (RFR). RuvA specifically binds to HJ cruciform DNA, conferring on it an open structure. The RuvB hexamer acts as an ATP-dependent pump, pulling dsDNA into and through the RuvAB complex. HJ branch migration allows RuvC to scan DNA until it finds its consensus sequence, where it cleaves and resolves the cruciform DNA.</text>
</comment>
<comment type="subunit">
    <text evidence="1">Homotetramer. Forms an RuvA(8)-RuvB(12)-Holliday junction (HJ) complex. HJ DNA is sandwiched between 2 RuvA tetramers; dsDNA enters through RuvA and exits via RuvB. An RuvB hexamer assembles on each DNA strand where it exits the tetramer. Each RuvB hexamer is contacted by two RuvA subunits (via domain III) on 2 adjacent RuvB subunits; this complex drives branch migration. In the full resolvosome a probable DNA-RuvA(4)-RuvB(12)-RuvC(2) complex forms which resolves the HJ.</text>
</comment>
<comment type="subcellular location">
    <subcellularLocation>
        <location evidence="1">Cytoplasm</location>
    </subcellularLocation>
</comment>
<comment type="domain">
    <text evidence="1">Has three domains with a flexible linker between the domains II and III and assumes an 'L' shape. Domain III is highly mobile and contacts RuvB.</text>
</comment>
<comment type="similarity">
    <text evidence="1">Belongs to the RuvA family.</text>
</comment>
<feature type="chain" id="PRO_1000002540" description="Holliday junction branch migration complex subunit RuvA">
    <location>
        <begin position="1"/>
        <end position="197"/>
    </location>
</feature>
<feature type="region of interest" description="Domain I" evidence="1">
    <location>
        <begin position="1"/>
        <end position="64"/>
    </location>
</feature>
<feature type="region of interest" description="Domain II" evidence="1">
    <location>
        <begin position="65"/>
        <end position="145"/>
    </location>
</feature>
<feature type="region of interest" description="Flexible linker" evidence="1">
    <location>
        <begin position="146"/>
        <end position="148"/>
    </location>
</feature>
<feature type="region of interest" description="Domain III" evidence="1">
    <location>
        <begin position="148"/>
        <end position="197"/>
    </location>
</feature>
<name>RUVA_ROSS1</name>
<keyword id="KW-0963">Cytoplasm</keyword>
<keyword id="KW-0227">DNA damage</keyword>
<keyword id="KW-0233">DNA recombination</keyword>
<keyword id="KW-0234">DNA repair</keyword>
<keyword id="KW-0238">DNA-binding</keyword>
<gene>
    <name evidence="1" type="primary">ruvA</name>
    <name type="ordered locus">RoseRS_3772</name>
</gene>
<sequence>MIASIRGILIAVAADHVVVETGGIGWMIYAPRPVIAALGDIGATVRLFTYLLVREDSLTLYGFETVEQRQLFETLLSVTGVGPQAALNLLSSGTTDELRLAIATGDVTRLARTPRIGKKLAERLVLELKGKINVKGLPTGAAVTPAVAAANAELSEALISLGFTDAEAAAAIAALPSDAPPDLEERVRLALRYFSAS</sequence>
<dbReference type="EMBL" id="CP000686">
    <property type="protein sequence ID" value="ABQ92126.1"/>
    <property type="molecule type" value="Genomic_DNA"/>
</dbReference>
<dbReference type="RefSeq" id="WP_011958468.1">
    <property type="nucleotide sequence ID" value="NC_009523.1"/>
</dbReference>
<dbReference type="SMR" id="A5UZS3"/>
<dbReference type="STRING" id="357808.RoseRS_3772"/>
<dbReference type="KEGG" id="rrs:RoseRS_3772"/>
<dbReference type="eggNOG" id="COG0632">
    <property type="taxonomic scope" value="Bacteria"/>
</dbReference>
<dbReference type="HOGENOM" id="CLU_087936_2_1_0"/>
<dbReference type="OrthoDB" id="5293449at2"/>
<dbReference type="Proteomes" id="UP000006554">
    <property type="component" value="Chromosome"/>
</dbReference>
<dbReference type="GO" id="GO:0005737">
    <property type="term" value="C:cytoplasm"/>
    <property type="evidence" value="ECO:0007669"/>
    <property type="project" value="UniProtKB-SubCell"/>
</dbReference>
<dbReference type="GO" id="GO:0009379">
    <property type="term" value="C:Holliday junction helicase complex"/>
    <property type="evidence" value="ECO:0007669"/>
    <property type="project" value="InterPro"/>
</dbReference>
<dbReference type="GO" id="GO:0048476">
    <property type="term" value="C:Holliday junction resolvase complex"/>
    <property type="evidence" value="ECO:0007669"/>
    <property type="project" value="UniProtKB-UniRule"/>
</dbReference>
<dbReference type="GO" id="GO:0005524">
    <property type="term" value="F:ATP binding"/>
    <property type="evidence" value="ECO:0007669"/>
    <property type="project" value="InterPro"/>
</dbReference>
<dbReference type="GO" id="GO:0000400">
    <property type="term" value="F:four-way junction DNA binding"/>
    <property type="evidence" value="ECO:0007669"/>
    <property type="project" value="UniProtKB-UniRule"/>
</dbReference>
<dbReference type="GO" id="GO:0009378">
    <property type="term" value="F:four-way junction helicase activity"/>
    <property type="evidence" value="ECO:0007669"/>
    <property type="project" value="InterPro"/>
</dbReference>
<dbReference type="GO" id="GO:0006310">
    <property type="term" value="P:DNA recombination"/>
    <property type="evidence" value="ECO:0007669"/>
    <property type="project" value="UniProtKB-UniRule"/>
</dbReference>
<dbReference type="GO" id="GO:0006281">
    <property type="term" value="P:DNA repair"/>
    <property type="evidence" value="ECO:0007669"/>
    <property type="project" value="UniProtKB-UniRule"/>
</dbReference>
<dbReference type="Gene3D" id="1.10.150.20">
    <property type="entry name" value="5' to 3' exonuclease, C-terminal subdomain"/>
    <property type="match status" value="1"/>
</dbReference>
<dbReference type="Gene3D" id="1.10.8.10">
    <property type="entry name" value="DNA helicase RuvA subunit, C-terminal domain"/>
    <property type="match status" value="1"/>
</dbReference>
<dbReference type="Gene3D" id="2.40.50.140">
    <property type="entry name" value="Nucleic acid-binding proteins"/>
    <property type="match status" value="1"/>
</dbReference>
<dbReference type="HAMAP" id="MF_00031">
    <property type="entry name" value="DNA_HJ_migration_RuvA"/>
    <property type="match status" value="1"/>
</dbReference>
<dbReference type="InterPro" id="IPR013849">
    <property type="entry name" value="DNA_helicase_Holl-junc_RuvA_I"/>
</dbReference>
<dbReference type="InterPro" id="IPR003583">
    <property type="entry name" value="Hlx-hairpin-Hlx_DNA-bd_motif"/>
</dbReference>
<dbReference type="InterPro" id="IPR012340">
    <property type="entry name" value="NA-bd_OB-fold"/>
</dbReference>
<dbReference type="InterPro" id="IPR000085">
    <property type="entry name" value="RuvA"/>
</dbReference>
<dbReference type="InterPro" id="IPR010994">
    <property type="entry name" value="RuvA_2-like"/>
</dbReference>
<dbReference type="InterPro" id="IPR011114">
    <property type="entry name" value="RuvA_C"/>
</dbReference>
<dbReference type="InterPro" id="IPR036267">
    <property type="entry name" value="RuvA_C_sf"/>
</dbReference>
<dbReference type="NCBIfam" id="TIGR00084">
    <property type="entry name" value="ruvA"/>
    <property type="match status" value="1"/>
</dbReference>
<dbReference type="Pfam" id="PF14520">
    <property type="entry name" value="HHH_5"/>
    <property type="match status" value="1"/>
</dbReference>
<dbReference type="Pfam" id="PF07499">
    <property type="entry name" value="RuvA_C"/>
    <property type="match status" value="1"/>
</dbReference>
<dbReference type="Pfam" id="PF01330">
    <property type="entry name" value="RuvA_N"/>
    <property type="match status" value="1"/>
</dbReference>
<dbReference type="SMART" id="SM00278">
    <property type="entry name" value="HhH1"/>
    <property type="match status" value="2"/>
</dbReference>
<dbReference type="SUPFAM" id="SSF46929">
    <property type="entry name" value="DNA helicase RuvA subunit, C-terminal domain"/>
    <property type="match status" value="1"/>
</dbReference>
<dbReference type="SUPFAM" id="SSF50249">
    <property type="entry name" value="Nucleic acid-binding proteins"/>
    <property type="match status" value="1"/>
</dbReference>
<dbReference type="SUPFAM" id="SSF47781">
    <property type="entry name" value="RuvA domain 2-like"/>
    <property type="match status" value="1"/>
</dbReference>
<accession>A5UZS3</accession>
<proteinExistence type="inferred from homology"/>
<reference key="1">
    <citation type="submission" date="2007-04" db="EMBL/GenBank/DDBJ databases">
        <title>Complete sequence of Roseiflexus sp. RS-1.</title>
        <authorList>
            <consortium name="US DOE Joint Genome Institute"/>
            <person name="Copeland A."/>
            <person name="Lucas S."/>
            <person name="Lapidus A."/>
            <person name="Barry K."/>
            <person name="Detter J.C."/>
            <person name="Glavina del Rio T."/>
            <person name="Hammon N."/>
            <person name="Israni S."/>
            <person name="Dalin E."/>
            <person name="Tice H."/>
            <person name="Pitluck S."/>
            <person name="Chertkov O."/>
            <person name="Brettin T."/>
            <person name="Bruce D."/>
            <person name="Han C."/>
            <person name="Schmutz J."/>
            <person name="Larimer F."/>
            <person name="Land M."/>
            <person name="Hauser L."/>
            <person name="Kyrpides N."/>
            <person name="Mikhailova N."/>
            <person name="Bryant D.A."/>
            <person name="Richardson P."/>
        </authorList>
    </citation>
    <scope>NUCLEOTIDE SEQUENCE [LARGE SCALE GENOMIC DNA]</scope>
    <source>
        <strain>RS-1</strain>
    </source>
</reference>
<organism>
    <name type="scientific">Roseiflexus sp. (strain RS-1)</name>
    <dbReference type="NCBI Taxonomy" id="357808"/>
    <lineage>
        <taxon>Bacteria</taxon>
        <taxon>Bacillati</taxon>
        <taxon>Chloroflexota</taxon>
        <taxon>Chloroflexia</taxon>
        <taxon>Chloroflexales</taxon>
        <taxon>Roseiflexineae</taxon>
        <taxon>Roseiflexaceae</taxon>
        <taxon>Roseiflexus</taxon>
    </lineage>
</organism>